<evidence type="ECO:0000250" key="1"/>
<evidence type="ECO:0000255" key="2">
    <source>
        <dbReference type="PROSITE-ProRule" id="PRU00176"/>
    </source>
</evidence>
<evidence type="ECO:0000255" key="3">
    <source>
        <dbReference type="PROSITE-ProRule" id="PRU00723"/>
    </source>
</evidence>
<evidence type="ECO:0000256" key="4">
    <source>
        <dbReference type="SAM" id="MobiDB-lite"/>
    </source>
</evidence>
<evidence type="ECO:0000305" key="5"/>
<accession>Q5BB35</accession>
<accession>C8VMT8</accession>
<organism>
    <name type="scientific">Emericella nidulans (strain FGSC A4 / ATCC 38163 / CBS 112.46 / NRRL 194 / M139)</name>
    <name type="common">Aspergillus nidulans</name>
    <dbReference type="NCBI Taxonomy" id="227321"/>
    <lineage>
        <taxon>Eukaryota</taxon>
        <taxon>Fungi</taxon>
        <taxon>Dikarya</taxon>
        <taxon>Ascomycota</taxon>
        <taxon>Pezizomycotina</taxon>
        <taxon>Eurotiomycetes</taxon>
        <taxon>Eurotiomycetidae</taxon>
        <taxon>Eurotiales</taxon>
        <taxon>Aspergillaceae</taxon>
        <taxon>Aspergillus</taxon>
        <taxon>Aspergillus subgen. Nidulantes</taxon>
    </lineage>
</organism>
<reference key="1">
    <citation type="journal article" date="2005" name="Nature">
        <title>Sequencing of Aspergillus nidulans and comparative analysis with A. fumigatus and A. oryzae.</title>
        <authorList>
            <person name="Galagan J.E."/>
            <person name="Calvo S.E."/>
            <person name="Cuomo C."/>
            <person name="Ma L.-J."/>
            <person name="Wortman J.R."/>
            <person name="Batzoglou S."/>
            <person name="Lee S.-I."/>
            <person name="Bastuerkmen M."/>
            <person name="Spevak C.C."/>
            <person name="Clutterbuck J."/>
            <person name="Kapitonov V."/>
            <person name="Jurka J."/>
            <person name="Scazzocchio C."/>
            <person name="Farman M.L."/>
            <person name="Butler J."/>
            <person name="Purcell S."/>
            <person name="Harris S."/>
            <person name="Braus G.H."/>
            <person name="Draht O."/>
            <person name="Busch S."/>
            <person name="D'Enfert C."/>
            <person name="Bouchier C."/>
            <person name="Goldman G.H."/>
            <person name="Bell-Pedersen D."/>
            <person name="Griffiths-Jones S."/>
            <person name="Doonan J.H."/>
            <person name="Yu J."/>
            <person name="Vienken K."/>
            <person name="Pain A."/>
            <person name="Freitag M."/>
            <person name="Selker E.U."/>
            <person name="Archer D.B."/>
            <person name="Penalva M.A."/>
            <person name="Oakley B.R."/>
            <person name="Momany M."/>
            <person name="Tanaka T."/>
            <person name="Kumagai T."/>
            <person name="Asai K."/>
            <person name="Machida M."/>
            <person name="Nierman W.C."/>
            <person name="Denning D.W."/>
            <person name="Caddick M.X."/>
            <person name="Hynes M."/>
            <person name="Paoletti M."/>
            <person name="Fischer R."/>
            <person name="Miller B.L."/>
            <person name="Dyer P.S."/>
            <person name="Sachs M.S."/>
            <person name="Osmani S.A."/>
            <person name="Birren B.W."/>
        </authorList>
    </citation>
    <scope>NUCLEOTIDE SEQUENCE [LARGE SCALE GENOMIC DNA]</scope>
    <source>
        <strain>FGSC A4 / ATCC 38163 / CBS 112.46 / NRRL 194 / M139</strain>
    </source>
</reference>
<reference key="2">
    <citation type="journal article" date="2009" name="Fungal Genet. Biol.">
        <title>The 2008 update of the Aspergillus nidulans genome annotation: a community effort.</title>
        <authorList>
            <person name="Wortman J.R."/>
            <person name="Gilsenan J.M."/>
            <person name="Joardar V."/>
            <person name="Deegan J."/>
            <person name="Clutterbuck J."/>
            <person name="Andersen M.R."/>
            <person name="Archer D."/>
            <person name="Bencina M."/>
            <person name="Braus G."/>
            <person name="Coutinho P."/>
            <person name="von Dohren H."/>
            <person name="Doonan J."/>
            <person name="Driessen A.J."/>
            <person name="Durek P."/>
            <person name="Espeso E."/>
            <person name="Fekete E."/>
            <person name="Flipphi M."/>
            <person name="Estrada C.G."/>
            <person name="Geysens S."/>
            <person name="Goldman G."/>
            <person name="de Groot P.W."/>
            <person name="Hansen K."/>
            <person name="Harris S.D."/>
            <person name="Heinekamp T."/>
            <person name="Helmstaedt K."/>
            <person name="Henrissat B."/>
            <person name="Hofmann G."/>
            <person name="Homan T."/>
            <person name="Horio T."/>
            <person name="Horiuchi H."/>
            <person name="James S."/>
            <person name="Jones M."/>
            <person name="Karaffa L."/>
            <person name="Karanyi Z."/>
            <person name="Kato M."/>
            <person name="Keller N."/>
            <person name="Kelly D.E."/>
            <person name="Kiel J.A."/>
            <person name="Kim J.M."/>
            <person name="van der Klei I.J."/>
            <person name="Klis F.M."/>
            <person name="Kovalchuk A."/>
            <person name="Krasevec N."/>
            <person name="Kubicek C.P."/>
            <person name="Liu B."/>
            <person name="Maccabe A."/>
            <person name="Meyer V."/>
            <person name="Mirabito P."/>
            <person name="Miskei M."/>
            <person name="Mos M."/>
            <person name="Mullins J."/>
            <person name="Nelson D.R."/>
            <person name="Nielsen J."/>
            <person name="Oakley B.R."/>
            <person name="Osmani S.A."/>
            <person name="Pakula T."/>
            <person name="Paszewski A."/>
            <person name="Paulsen I."/>
            <person name="Pilsyk S."/>
            <person name="Pocsi I."/>
            <person name="Punt P.J."/>
            <person name="Ram A.F."/>
            <person name="Ren Q."/>
            <person name="Robellet X."/>
            <person name="Robson G."/>
            <person name="Seiboth B."/>
            <person name="van Solingen P."/>
            <person name="Specht T."/>
            <person name="Sun J."/>
            <person name="Taheri-Talesh N."/>
            <person name="Takeshita N."/>
            <person name="Ussery D."/>
            <person name="vanKuyk P.A."/>
            <person name="Visser H."/>
            <person name="van de Vondervoort P.J."/>
            <person name="de Vries R.P."/>
            <person name="Walton J."/>
            <person name="Xiang X."/>
            <person name="Xiong Y."/>
            <person name="Zeng A.P."/>
            <person name="Brandt B.W."/>
            <person name="Cornell M.J."/>
            <person name="van den Hondel C.A."/>
            <person name="Visser J."/>
            <person name="Oliver S.G."/>
            <person name="Turner G."/>
        </authorList>
    </citation>
    <scope>GENOME REANNOTATION</scope>
    <source>
        <strain>FGSC A4 / ATCC 38163 / CBS 112.46 / NRRL 194 / M139</strain>
    </source>
</reference>
<protein>
    <recommendedName>
        <fullName>Pre-mRNA-splicing factor cwc2</fullName>
    </recommendedName>
</protein>
<feature type="chain" id="PRO_0000081545" description="Pre-mRNA-splicing factor cwc2">
    <location>
        <begin position="1"/>
        <end position="417"/>
    </location>
</feature>
<feature type="domain" description="RRM" evidence="2">
    <location>
        <begin position="197"/>
        <end position="271"/>
    </location>
</feature>
<feature type="zinc finger region" description="C3H1-type" evidence="3">
    <location>
        <begin position="134"/>
        <end position="161"/>
    </location>
</feature>
<feature type="region of interest" description="Disordered" evidence="4">
    <location>
        <begin position="1"/>
        <end position="89"/>
    </location>
</feature>
<feature type="region of interest" description="Disordered" evidence="4">
    <location>
        <begin position="391"/>
        <end position="417"/>
    </location>
</feature>
<feature type="compositionally biased region" description="Polar residues" evidence="4">
    <location>
        <begin position="40"/>
        <end position="57"/>
    </location>
</feature>
<feature type="compositionally biased region" description="Basic residues" evidence="4">
    <location>
        <begin position="60"/>
        <end position="73"/>
    </location>
</feature>
<keyword id="KW-0131">Cell cycle</keyword>
<keyword id="KW-0479">Metal-binding</keyword>
<keyword id="KW-0507">mRNA processing</keyword>
<keyword id="KW-0508">mRNA splicing</keyword>
<keyword id="KW-0539">Nucleus</keyword>
<keyword id="KW-1185">Reference proteome</keyword>
<keyword id="KW-0694">RNA-binding</keyword>
<keyword id="KW-0747">Spliceosome</keyword>
<keyword id="KW-0862">Zinc</keyword>
<keyword id="KW-0863">Zinc-finger</keyword>
<name>CWC2_EMENI</name>
<gene>
    <name type="primary">cwc2</name>
    <name type="ORF">AN2245</name>
</gene>
<sequence length="417" mass="46018">MADTAVIDTSPAAATAEPSVDTTPQDGEREEITPNGENALVQQQSETAETGITDANSTQKKTKKIIRRKRRPARPQVDPATLKSEPPPQTGTVFNIWYNKWSGGDREDKYLSKTAAPSRCNIARDSGYTRADKVRGSYFCLFFARGICPKGHECEYLHRLPTLHDLFNPNVDCFGRDKHSDYRDDMGGVGSFMRQNRTLYVGRIHVTDDIEEVVARHFAEWGQIDRTRVLTSRGVAFVTYTNEANAQFAKEAMAHQSLDHNEILNVRWATVDPNPLAQKREARRLEEQAAEAVRRALPAEFVAELEGRDPEAKKRKRIEGSYGLQGYEPPDEVWFARAKELEGTGNEHAKLEAPEQPLMIESGSASAPQNQVESSGGIFSSSAVAALRGLNGGNVTTKPAPQASGPLVAYGSDDESD</sequence>
<proteinExistence type="inferred from homology"/>
<dbReference type="EMBL" id="AACD01000036">
    <property type="protein sequence ID" value="EAA63930.1"/>
    <property type="molecule type" value="Genomic_DNA"/>
</dbReference>
<dbReference type="EMBL" id="BN001307">
    <property type="protein sequence ID" value="CBF86452.1"/>
    <property type="molecule type" value="Genomic_DNA"/>
</dbReference>
<dbReference type="RefSeq" id="XP_659849.1">
    <property type="nucleotide sequence ID" value="XM_654757.1"/>
</dbReference>
<dbReference type="SMR" id="Q5BB35"/>
<dbReference type="FunCoup" id="Q5BB35">
    <property type="interactions" value="165"/>
</dbReference>
<dbReference type="STRING" id="227321.Q5BB35"/>
<dbReference type="EnsemblFungi" id="CBF86452">
    <property type="protein sequence ID" value="CBF86452"/>
    <property type="gene ID" value="ANIA_02245"/>
</dbReference>
<dbReference type="KEGG" id="ani:ANIA_02245"/>
<dbReference type="VEuPathDB" id="FungiDB:AN2245"/>
<dbReference type="eggNOG" id="KOG0118">
    <property type="taxonomic scope" value="Eukaryota"/>
</dbReference>
<dbReference type="HOGENOM" id="CLU_043308_1_0_1"/>
<dbReference type="InParanoid" id="Q5BB35"/>
<dbReference type="OMA" id="CNIAKDS"/>
<dbReference type="OrthoDB" id="10251848at2759"/>
<dbReference type="Proteomes" id="UP000000560">
    <property type="component" value="Chromosome VII"/>
</dbReference>
<dbReference type="GO" id="GO:0071014">
    <property type="term" value="C:post-mRNA release spliceosomal complex"/>
    <property type="evidence" value="ECO:0007669"/>
    <property type="project" value="EnsemblFungi"/>
</dbReference>
<dbReference type="GO" id="GO:0000974">
    <property type="term" value="C:Prp19 complex"/>
    <property type="evidence" value="ECO:0000250"/>
    <property type="project" value="UniProtKB"/>
</dbReference>
<dbReference type="GO" id="GO:0071006">
    <property type="term" value="C:U2-type catalytic step 1 spliceosome"/>
    <property type="evidence" value="ECO:0000318"/>
    <property type="project" value="GO_Central"/>
</dbReference>
<dbReference type="GO" id="GO:0071007">
    <property type="term" value="C:U2-type catalytic step 2 spliceosome"/>
    <property type="evidence" value="ECO:0000318"/>
    <property type="project" value="GO_Central"/>
</dbReference>
<dbReference type="GO" id="GO:0036002">
    <property type="term" value="F:pre-mRNA binding"/>
    <property type="evidence" value="ECO:0000250"/>
    <property type="project" value="UniProtKB"/>
</dbReference>
<dbReference type="GO" id="GO:0017070">
    <property type="term" value="F:U6 snRNA binding"/>
    <property type="evidence" value="ECO:0000250"/>
    <property type="project" value="UniProtKB"/>
</dbReference>
<dbReference type="GO" id="GO:0008270">
    <property type="term" value="F:zinc ion binding"/>
    <property type="evidence" value="ECO:0007669"/>
    <property type="project" value="UniProtKB-KW"/>
</dbReference>
<dbReference type="GO" id="GO:0045292">
    <property type="term" value="P:mRNA cis splicing, via spliceosome"/>
    <property type="evidence" value="ECO:0000250"/>
    <property type="project" value="UniProtKB"/>
</dbReference>
<dbReference type="GO" id="GO:0045787">
    <property type="term" value="P:positive regulation of cell cycle"/>
    <property type="evidence" value="ECO:0000250"/>
    <property type="project" value="UniProtKB"/>
</dbReference>
<dbReference type="GO" id="GO:0033120">
    <property type="term" value="P:positive regulation of RNA splicing"/>
    <property type="evidence" value="ECO:0000250"/>
    <property type="project" value="UniProtKB"/>
</dbReference>
<dbReference type="GO" id="GO:0000387">
    <property type="term" value="P:spliceosomal snRNP assembly"/>
    <property type="evidence" value="ECO:0000250"/>
    <property type="project" value="UniProtKB"/>
</dbReference>
<dbReference type="CDD" id="cd12360">
    <property type="entry name" value="RRM_cwf2"/>
    <property type="match status" value="1"/>
</dbReference>
<dbReference type="FunFam" id="3.30.70.330:FF:000249">
    <property type="entry name" value="Pre-mRNA-splicing factor CWC2, variant"/>
    <property type="match status" value="1"/>
</dbReference>
<dbReference type="Gene3D" id="3.30.70.330">
    <property type="match status" value="1"/>
</dbReference>
<dbReference type="InterPro" id="IPR039171">
    <property type="entry name" value="Cwc2/Slt11"/>
</dbReference>
<dbReference type="InterPro" id="IPR034181">
    <property type="entry name" value="Cwc2_RRM"/>
</dbReference>
<dbReference type="InterPro" id="IPR012677">
    <property type="entry name" value="Nucleotide-bd_a/b_plait_sf"/>
</dbReference>
<dbReference type="InterPro" id="IPR035979">
    <property type="entry name" value="RBD_domain_sf"/>
</dbReference>
<dbReference type="InterPro" id="IPR000504">
    <property type="entry name" value="RRM_dom"/>
</dbReference>
<dbReference type="InterPro" id="IPR032297">
    <property type="entry name" value="Torus"/>
</dbReference>
<dbReference type="InterPro" id="IPR000571">
    <property type="entry name" value="Znf_CCCH"/>
</dbReference>
<dbReference type="InterPro" id="IPR036855">
    <property type="entry name" value="Znf_CCCH_sf"/>
</dbReference>
<dbReference type="PANTHER" id="PTHR14089:SF2">
    <property type="entry name" value="PRE-MRNA-SPLICING FACTOR CWC2"/>
    <property type="match status" value="1"/>
</dbReference>
<dbReference type="PANTHER" id="PTHR14089">
    <property type="entry name" value="PRE-MRNA-SPLICING FACTOR RBM22"/>
    <property type="match status" value="1"/>
</dbReference>
<dbReference type="Pfam" id="PF00076">
    <property type="entry name" value="RRM_1"/>
    <property type="match status" value="1"/>
</dbReference>
<dbReference type="Pfam" id="PF16131">
    <property type="entry name" value="Torus"/>
    <property type="match status" value="1"/>
</dbReference>
<dbReference type="SMART" id="SM00360">
    <property type="entry name" value="RRM"/>
    <property type="match status" value="1"/>
</dbReference>
<dbReference type="SUPFAM" id="SSF90229">
    <property type="entry name" value="CCCH zinc finger"/>
    <property type="match status" value="1"/>
</dbReference>
<dbReference type="SUPFAM" id="SSF54928">
    <property type="entry name" value="RNA-binding domain, RBD"/>
    <property type="match status" value="1"/>
</dbReference>
<dbReference type="PROSITE" id="PS50102">
    <property type="entry name" value="RRM"/>
    <property type="match status" value="1"/>
</dbReference>
<dbReference type="PROSITE" id="PS50103">
    <property type="entry name" value="ZF_C3H1"/>
    <property type="match status" value="1"/>
</dbReference>
<comment type="function">
    <text evidence="1">Involved in the first step of pre-mRNA splicing. Required for cell growth and cell cycle control. Plays a role in the levels of the U1, U4, U5 and U6 snRNAs and the maintenance of the U4/U6 snRNA complex. May provide the link between the 'nineteen complex' NTC spliceosome protein complex and the spliceosome through the U6 snRNA. Associates predominantly with U6 snRNAs in assembled active spliceosomes. Binds directly to the internal stem-loop (ISL) domain of the U6 snRNA and to the pre-mRNA intron near the 5' splice site during the activation and catalytic phases of the spliceosome cycle (By similarity).</text>
</comment>
<comment type="subunit">
    <text evidence="1">Associated with the spliceosome.</text>
</comment>
<comment type="subcellular location">
    <subcellularLocation>
        <location evidence="1">Nucleus</location>
    </subcellularLocation>
</comment>
<comment type="domain">
    <text evidence="1">The C-terminal RRM domain and the zinc finger motif are necessary for RNA-binding.</text>
</comment>
<comment type="similarity">
    <text evidence="5">Belongs to the RRM CWC2 family.</text>
</comment>